<comment type="function">
    <text evidence="1">An aminoacyl-tRNA editing enzyme that deacylates mischarged D-aminoacyl-tRNAs. Also deacylates mischarged glycyl-tRNA(Ala), protecting cells against glycine mischarging by AlaRS. Acts via tRNA-based rather than protein-based catalysis; rejects L-amino acids rather than detecting D-amino acids in the active site. By recycling D-aminoacyl-tRNA to D-amino acids and free tRNA molecules, this enzyme counteracts the toxicity associated with the formation of D-aminoacyl-tRNA entities in vivo and helps enforce protein L-homochirality.</text>
</comment>
<comment type="catalytic activity">
    <reaction evidence="1">
        <text>glycyl-tRNA(Ala) + H2O = tRNA(Ala) + glycine + H(+)</text>
        <dbReference type="Rhea" id="RHEA:53744"/>
        <dbReference type="Rhea" id="RHEA-COMP:9657"/>
        <dbReference type="Rhea" id="RHEA-COMP:13640"/>
        <dbReference type="ChEBI" id="CHEBI:15377"/>
        <dbReference type="ChEBI" id="CHEBI:15378"/>
        <dbReference type="ChEBI" id="CHEBI:57305"/>
        <dbReference type="ChEBI" id="CHEBI:78442"/>
        <dbReference type="ChEBI" id="CHEBI:78522"/>
        <dbReference type="EC" id="3.1.1.96"/>
    </reaction>
</comment>
<comment type="catalytic activity">
    <reaction evidence="1">
        <text>a D-aminoacyl-tRNA + H2O = a tRNA + a D-alpha-amino acid + H(+)</text>
        <dbReference type="Rhea" id="RHEA:13953"/>
        <dbReference type="Rhea" id="RHEA-COMP:10123"/>
        <dbReference type="Rhea" id="RHEA-COMP:10124"/>
        <dbReference type="ChEBI" id="CHEBI:15377"/>
        <dbReference type="ChEBI" id="CHEBI:15378"/>
        <dbReference type="ChEBI" id="CHEBI:59871"/>
        <dbReference type="ChEBI" id="CHEBI:78442"/>
        <dbReference type="ChEBI" id="CHEBI:79333"/>
        <dbReference type="EC" id="3.1.1.96"/>
    </reaction>
</comment>
<comment type="subunit">
    <text evidence="1">Homodimer.</text>
</comment>
<comment type="subcellular location">
    <subcellularLocation>
        <location evidence="1">Cytoplasm</location>
    </subcellularLocation>
</comment>
<comment type="domain">
    <text evidence="1">A Gly-cisPro motif from one monomer fits into the active site of the other monomer to allow specific chiral rejection of L-amino acids.</text>
</comment>
<comment type="similarity">
    <text evidence="1">Belongs to the DTD family.</text>
</comment>
<proteinExistence type="inferred from homology"/>
<feature type="chain" id="PRO_1000127556" description="D-aminoacyl-tRNA deacylase">
    <location>
        <begin position="1"/>
        <end position="150"/>
    </location>
</feature>
<feature type="short sequence motif" description="Gly-cisPro motif, important for rejection of L-amino acids" evidence="1">
    <location>
        <begin position="138"/>
        <end position="139"/>
    </location>
</feature>
<evidence type="ECO:0000255" key="1">
    <source>
        <dbReference type="HAMAP-Rule" id="MF_00518"/>
    </source>
</evidence>
<name>DTD_OPITP</name>
<organism>
    <name type="scientific">Opitutus terrae (strain DSM 11246 / JCM 15787 / PB90-1)</name>
    <dbReference type="NCBI Taxonomy" id="452637"/>
    <lineage>
        <taxon>Bacteria</taxon>
        <taxon>Pseudomonadati</taxon>
        <taxon>Verrucomicrobiota</taxon>
        <taxon>Opitutia</taxon>
        <taxon>Opitutales</taxon>
        <taxon>Opitutaceae</taxon>
        <taxon>Opitutus</taxon>
    </lineage>
</organism>
<keyword id="KW-0963">Cytoplasm</keyword>
<keyword id="KW-0378">Hydrolase</keyword>
<keyword id="KW-1185">Reference proteome</keyword>
<keyword id="KW-0694">RNA-binding</keyword>
<keyword id="KW-0820">tRNA-binding</keyword>
<sequence>MRAVIQRVSSASVAVDGQITGAIARGLLVLLGVAHDDTPADVEWLAGKICALRIFEDDEGRMNRSVVETAGGVLVVSQFTLLASTRKGTRPSFNDAARPELAEPLYAAFLQQVSGRLGRPAASGVFGAMMTVSLVNDGPVTLVIDSHARE</sequence>
<protein>
    <recommendedName>
        <fullName evidence="1">D-aminoacyl-tRNA deacylase</fullName>
        <shortName evidence="1">DTD</shortName>
        <ecNumber evidence="1">3.1.1.96</ecNumber>
    </recommendedName>
    <alternativeName>
        <fullName evidence="1">Gly-tRNA(Ala) deacylase</fullName>
    </alternativeName>
</protein>
<accession>B1ZZ94</accession>
<dbReference type="EC" id="3.1.1.96" evidence="1"/>
<dbReference type="EMBL" id="CP001032">
    <property type="protein sequence ID" value="ACB77166.1"/>
    <property type="molecule type" value="Genomic_DNA"/>
</dbReference>
<dbReference type="RefSeq" id="WP_012376695.1">
    <property type="nucleotide sequence ID" value="NC_010571.1"/>
</dbReference>
<dbReference type="SMR" id="B1ZZ94"/>
<dbReference type="STRING" id="452637.Oter_3892"/>
<dbReference type="KEGG" id="ote:Oter_3892"/>
<dbReference type="eggNOG" id="COG1490">
    <property type="taxonomic scope" value="Bacteria"/>
</dbReference>
<dbReference type="HOGENOM" id="CLU_076901_1_0_0"/>
<dbReference type="OrthoDB" id="9801395at2"/>
<dbReference type="Proteomes" id="UP000007013">
    <property type="component" value="Chromosome"/>
</dbReference>
<dbReference type="GO" id="GO:0005737">
    <property type="term" value="C:cytoplasm"/>
    <property type="evidence" value="ECO:0007669"/>
    <property type="project" value="UniProtKB-SubCell"/>
</dbReference>
<dbReference type="GO" id="GO:0051500">
    <property type="term" value="F:D-tyrosyl-tRNA(Tyr) deacylase activity"/>
    <property type="evidence" value="ECO:0007669"/>
    <property type="project" value="TreeGrafter"/>
</dbReference>
<dbReference type="GO" id="GO:0106026">
    <property type="term" value="F:Gly-tRNA(Ala) deacylase activity"/>
    <property type="evidence" value="ECO:0007669"/>
    <property type="project" value="UniProtKB-UniRule"/>
</dbReference>
<dbReference type="GO" id="GO:0043908">
    <property type="term" value="F:Ser(Gly)-tRNA(Ala) hydrolase activity"/>
    <property type="evidence" value="ECO:0007669"/>
    <property type="project" value="UniProtKB-UniRule"/>
</dbReference>
<dbReference type="GO" id="GO:0000049">
    <property type="term" value="F:tRNA binding"/>
    <property type="evidence" value="ECO:0007669"/>
    <property type="project" value="UniProtKB-UniRule"/>
</dbReference>
<dbReference type="GO" id="GO:0019478">
    <property type="term" value="P:D-amino acid catabolic process"/>
    <property type="evidence" value="ECO:0007669"/>
    <property type="project" value="UniProtKB-UniRule"/>
</dbReference>
<dbReference type="CDD" id="cd00563">
    <property type="entry name" value="Dtyr_deacylase"/>
    <property type="match status" value="1"/>
</dbReference>
<dbReference type="FunFam" id="3.50.80.10:FF:000001">
    <property type="entry name" value="D-aminoacyl-tRNA deacylase"/>
    <property type="match status" value="1"/>
</dbReference>
<dbReference type="Gene3D" id="3.50.80.10">
    <property type="entry name" value="D-tyrosyl-tRNA(Tyr) deacylase"/>
    <property type="match status" value="1"/>
</dbReference>
<dbReference type="HAMAP" id="MF_00518">
    <property type="entry name" value="Deacylase_Dtd"/>
    <property type="match status" value="1"/>
</dbReference>
<dbReference type="InterPro" id="IPR003732">
    <property type="entry name" value="Daa-tRNA_deacyls_DTD"/>
</dbReference>
<dbReference type="InterPro" id="IPR023509">
    <property type="entry name" value="DTD-like_sf"/>
</dbReference>
<dbReference type="NCBIfam" id="TIGR00256">
    <property type="entry name" value="D-aminoacyl-tRNA deacylase"/>
    <property type="match status" value="1"/>
</dbReference>
<dbReference type="PANTHER" id="PTHR10472:SF5">
    <property type="entry name" value="D-AMINOACYL-TRNA DEACYLASE 1"/>
    <property type="match status" value="1"/>
</dbReference>
<dbReference type="PANTHER" id="PTHR10472">
    <property type="entry name" value="D-TYROSYL-TRNA TYR DEACYLASE"/>
    <property type="match status" value="1"/>
</dbReference>
<dbReference type="Pfam" id="PF02580">
    <property type="entry name" value="Tyr_Deacylase"/>
    <property type="match status" value="1"/>
</dbReference>
<dbReference type="SUPFAM" id="SSF69500">
    <property type="entry name" value="DTD-like"/>
    <property type="match status" value="1"/>
</dbReference>
<gene>
    <name evidence="1" type="primary">dtd</name>
    <name type="ordered locus">Oter_3892</name>
</gene>
<reference key="1">
    <citation type="journal article" date="2011" name="J. Bacteriol.">
        <title>Genome sequence of the verrucomicrobium Opitutus terrae PB90-1, an abundant inhabitant of rice paddy soil ecosystems.</title>
        <authorList>
            <person name="van Passel M.W."/>
            <person name="Kant R."/>
            <person name="Palva A."/>
            <person name="Copeland A."/>
            <person name="Lucas S."/>
            <person name="Lapidus A."/>
            <person name="Glavina del Rio T."/>
            <person name="Pitluck S."/>
            <person name="Goltsman E."/>
            <person name="Clum A."/>
            <person name="Sun H."/>
            <person name="Schmutz J."/>
            <person name="Larimer F.W."/>
            <person name="Land M.L."/>
            <person name="Hauser L."/>
            <person name="Kyrpides N."/>
            <person name="Mikhailova N."/>
            <person name="Richardson P.P."/>
            <person name="Janssen P.H."/>
            <person name="de Vos W.M."/>
            <person name="Smidt H."/>
        </authorList>
    </citation>
    <scope>NUCLEOTIDE SEQUENCE [LARGE SCALE GENOMIC DNA]</scope>
    <source>
        <strain>DSM 11246 / JCM 15787 / PB90-1</strain>
    </source>
</reference>